<sequence length="982" mass="107084">METKGYHSLPEGLDMERRWGQVSQAVEHSSLGSTERTDENNYMEIVNVSCVSGAIPNNSTQGSSKEKHELLPCLQQDNNRPGILTSDIKTELESKELSATVAESMGLYMDSVRDADYYEQQNQQRSMSPAKIYQNVEQLVKFYKENGHRPSTLSCVNRPLRSFMSDSVSSVNGGVMRAIVKSPIMCHEKSPSVCSPLNMTSSVCSPAGINSVSSTTASFGSFPVHSPITQGTPLTCSPNVENRGSRSHSPAHASNVGSPLSSPLSSMKSSISSPPSHCSVKSPVSSPNNVTPRSSVSSPANINNSRCSVSSPSNTNNRSTLSSPAASTVGSICSPVNNAFSYTASGTSAGSSTSRDVVPSPDTQEKGAQEVPFPKTEEVESAISNGVTGQLNIVQYIKPEPDGAFSSSCLGGNSKINSDSPFSVPIKQESTKHSCSGTSFKGNPTVNPFPFMDGSYFSFMDDKDYYSLSGILGPPVPGFDGTCEGSGFPVGIKQEPDDGSYYPEASIPSSAIVGVNSGGQSFHYRIGAQGTISLSRSARDQSFQHLSSFPPVNTLVESWKSHGDLSSRRSDGYPVLEYIPENVSSSTLRSVSTGSSRPSKICLVCGDEASGCHYGVVTCGSCKVFFKRAVEGQHNYLCAGRNDCIIDKIRRKNCPACRLQKCLQAGMNLGARRSKKLGKLKGIHEEQPQQQPPPPPPPPQSPEEGTTYIAPAKEPSVNTALVPQLSAISRALTPSPAMVLENIEPEVVYAGYDNSKPDTAENLLSTLNRLAGKQMIQVVKWAKVLPGFKNLPLEDQITLIQYSWMCLSSFALSWRSYKHTNSQFLYFAPDLVFNEEKMHQSAMYELCQGMHQISLQFIRLQLTFEEYTIMKVLLLLSTVPKDGLKSQAAFEEMRTNYIKELRKMVTKCPNNSGQSWQRFYQLTKLLDSMHDLVNDLLEFCFYTFRESQALKVEFPAMLVEIISDQLPKVESGNAKPLYFHRK</sequence>
<organism>
    <name type="scientific">Saimiri sciureus</name>
    <name type="common">Common squirrel monkey</name>
    <dbReference type="NCBI Taxonomy" id="9521"/>
    <lineage>
        <taxon>Eukaryota</taxon>
        <taxon>Metazoa</taxon>
        <taxon>Chordata</taxon>
        <taxon>Craniata</taxon>
        <taxon>Vertebrata</taxon>
        <taxon>Euteleostomi</taxon>
        <taxon>Mammalia</taxon>
        <taxon>Eutheria</taxon>
        <taxon>Euarchontoglires</taxon>
        <taxon>Primates</taxon>
        <taxon>Haplorrhini</taxon>
        <taxon>Platyrrhini</taxon>
        <taxon>Cebidae</taxon>
        <taxon>Saimiriinae</taxon>
        <taxon>Saimiri</taxon>
    </lineage>
</organism>
<dbReference type="EMBL" id="AF245224">
    <property type="protein sequence ID" value="AAF63382.1"/>
    <property type="molecule type" value="mRNA"/>
</dbReference>
<dbReference type="SMR" id="Q9N0W8"/>
<dbReference type="GO" id="GO:0005737">
    <property type="term" value="C:cytoplasm"/>
    <property type="evidence" value="ECO:0007669"/>
    <property type="project" value="UniProtKB-SubCell"/>
</dbReference>
<dbReference type="GO" id="GO:0005654">
    <property type="term" value="C:nucleoplasm"/>
    <property type="evidence" value="ECO:0007669"/>
    <property type="project" value="UniProtKB-ARBA"/>
</dbReference>
<dbReference type="GO" id="GO:0003700">
    <property type="term" value="F:DNA-binding transcription factor activity"/>
    <property type="evidence" value="ECO:0007669"/>
    <property type="project" value="InterPro"/>
</dbReference>
<dbReference type="GO" id="GO:0043565">
    <property type="term" value="F:sequence-specific DNA binding"/>
    <property type="evidence" value="ECO:0007669"/>
    <property type="project" value="InterPro"/>
</dbReference>
<dbReference type="GO" id="GO:0005496">
    <property type="term" value="F:steroid binding"/>
    <property type="evidence" value="ECO:0007669"/>
    <property type="project" value="UniProtKB-KW"/>
</dbReference>
<dbReference type="GO" id="GO:0008270">
    <property type="term" value="F:zinc ion binding"/>
    <property type="evidence" value="ECO:0007669"/>
    <property type="project" value="UniProtKB-KW"/>
</dbReference>
<dbReference type="CDD" id="cd07172">
    <property type="entry name" value="NR_DBD_GR_PR"/>
    <property type="match status" value="1"/>
</dbReference>
<dbReference type="CDD" id="cd07075">
    <property type="entry name" value="NR_LBD_MR"/>
    <property type="match status" value="1"/>
</dbReference>
<dbReference type="FunFam" id="1.10.565.10:FF:000004">
    <property type="entry name" value="Androgen receptor variant"/>
    <property type="match status" value="1"/>
</dbReference>
<dbReference type="FunFam" id="3.30.50.10:FF:000029">
    <property type="entry name" value="mineralocorticoid receptor isoform X1"/>
    <property type="match status" value="1"/>
</dbReference>
<dbReference type="Gene3D" id="3.30.50.10">
    <property type="entry name" value="Erythroid Transcription Factor GATA-1, subunit A"/>
    <property type="match status" value="1"/>
</dbReference>
<dbReference type="Gene3D" id="1.10.565.10">
    <property type="entry name" value="Retinoid X Receptor"/>
    <property type="match status" value="1"/>
</dbReference>
<dbReference type="InterPro" id="IPR035500">
    <property type="entry name" value="NHR-like_dom_sf"/>
</dbReference>
<dbReference type="InterPro" id="IPR000536">
    <property type="entry name" value="Nucl_hrmn_rcpt_lig-bd"/>
</dbReference>
<dbReference type="InterPro" id="IPR050200">
    <property type="entry name" value="Nuclear_hormone_rcpt_NR3"/>
</dbReference>
<dbReference type="InterPro" id="IPR001723">
    <property type="entry name" value="Nuclear_hrmn_rcpt"/>
</dbReference>
<dbReference type="InterPro" id="IPR001628">
    <property type="entry name" value="Znf_hrmn_rcpt"/>
</dbReference>
<dbReference type="InterPro" id="IPR013088">
    <property type="entry name" value="Znf_NHR/GATA"/>
</dbReference>
<dbReference type="PANTHER" id="PTHR48092">
    <property type="entry name" value="KNIRPS-RELATED PROTEIN-RELATED"/>
    <property type="match status" value="1"/>
</dbReference>
<dbReference type="Pfam" id="PF00104">
    <property type="entry name" value="Hormone_recep"/>
    <property type="match status" value="1"/>
</dbReference>
<dbReference type="Pfam" id="PF00105">
    <property type="entry name" value="zf-C4"/>
    <property type="match status" value="1"/>
</dbReference>
<dbReference type="PRINTS" id="PR00398">
    <property type="entry name" value="STRDHORMONER"/>
</dbReference>
<dbReference type="PRINTS" id="PR00047">
    <property type="entry name" value="STROIDFINGER"/>
</dbReference>
<dbReference type="SMART" id="SM00430">
    <property type="entry name" value="HOLI"/>
    <property type="match status" value="1"/>
</dbReference>
<dbReference type="SMART" id="SM00399">
    <property type="entry name" value="ZnF_C4"/>
    <property type="match status" value="1"/>
</dbReference>
<dbReference type="SUPFAM" id="SSF57716">
    <property type="entry name" value="Glucocorticoid receptor-like (DNA-binding domain)"/>
    <property type="match status" value="1"/>
</dbReference>
<dbReference type="SUPFAM" id="SSF48508">
    <property type="entry name" value="Nuclear receptor ligand-binding domain"/>
    <property type="match status" value="1"/>
</dbReference>
<dbReference type="PROSITE" id="PS51843">
    <property type="entry name" value="NR_LBD"/>
    <property type="match status" value="1"/>
</dbReference>
<dbReference type="PROSITE" id="PS00031">
    <property type="entry name" value="NUCLEAR_REC_DBD_1"/>
    <property type="match status" value="1"/>
</dbReference>
<dbReference type="PROSITE" id="PS51030">
    <property type="entry name" value="NUCLEAR_REC_DBD_2"/>
    <property type="match status" value="1"/>
</dbReference>
<gene>
    <name type="primary">NR3C2</name>
    <name type="synonym">MLR</name>
</gene>
<reference key="1">
    <citation type="journal article" date="2000" name="J. Psychiatr. Res.">
        <title>Glucocorticoid and mineralocorticoid receptor mRNA expression in squirrel monkey brain.</title>
        <authorList>
            <person name="Patel P.D."/>
            <person name="Lopez J.F."/>
            <person name="Lyons D.M."/>
            <person name="Burke S."/>
            <person name="Wallace M."/>
            <person name="Schatzberg A.F."/>
        </authorList>
    </citation>
    <scope>NUCLEOTIDE SEQUENCE [MRNA]</scope>
    <source>
        <tissue>Brain</tissue>
    </source>
</reference>
<evidence type="ECO:0000250" key="1"/>
<evidence type="ECO:0000250" key="2">
    <source>
        <dbReference type="UniProtKB" id="P08235"/>
    </source>
</evidence>
<evidence type="ECO:0000250" key="3">
    <source>
        <dbReference type="UniProtKB" id="Q8VII8"/>
    </source>
</evidence>
<evidence type="ECO:0000255" key="4">
    <source>
        <dbReference type="PROSITE-ProRule" id="PRU00407"/>
    </source>
</evidence>
<evidence type="ECO:0000255" key="5">
    <source>
        <dbReference type="PROSITE-ProRule" id="PRU01189"/>
    </source>
</evidence>
<evidence type="ECO:0000256" key="6">
    <source>
        <dbReference type="SAM" id="MobiDB-lite"/>
    </source>
</evidence>
<evidence type="ECO:0000305" key="7"/>
<comment type="function">
    <text evidence="1">Receptor for both mineralocorticoids (MC) such as aldosterone and glucocorticoids (GC) such as corticosterone or cortisol. Binds to mineralocorticoid response elements (MRE) and transactivates target genes. The effect of MC is to increase ion and water transport and thus raise extracellular fluid volume and blood pressure and lower potassium levels (By similarity).</text>
</comment>
<comment type="subcellular location">
    <subcellularLocation>
        <location evidence="1">Cytoplasm</location>
    </subcellularLocation>
    <subcellularLocation>
        <location evidence="4">Nucleus</location>
    </subcellularLocation>
    <text evidence="1">Cytoplasmic and nuclear in the absence of ligand, nuclear after ligand-binding.</text>
</comment>
<comment type="tissue specificity">
    <text>Expressed in hippocampus, being restricted to the more superficial cortical layers.</text>
</comment>
<comment type="domain">
    <text>Composed of three domains: a modulating N-terminal domain, a DNA-binding domain and a C-terminal ligand-binding domain.</text>
</comment>
<comment type="PTM">
    <text evidence="1">Phosphorylated.</text>
</comment>
<comment type="similarity">
    <text evidence="7">Belongs to the nuclear hormone receptor family. NR3 subfamily.</text>
</comment>
<proteinExistence type="evidence at transcript level"/>
<name>MCR_SAISC</name>
<protein>
    <recommendedName>
        <fullName>Mineralocorticoid receptor</fullName>
        <shortName>MR</shortName>
    </recommendedName>
    <alternativeName>
        <fullName>Nuclear receptor subfamily 3 group C member 2</fullName>
    </alternativeName>
</protein>
<feature type="chain" id="PRO_0000053686" description="Mineralocorticoid receptor">
    <location>
        <begin position="1"/>
        <end position="982"/>
    </location>
</feature>
<feature type="domain" description="NR LBD" evidence="5">
    <location>
        <begin position="724"/>
        <end position="962"/>
    </location>
</feature>
<feature type="DNA-binding region" description="Nuclear receptor" evidence="4">
    <location>
        <begin position="602"/>
        <end position="667"/>
    </location>
</feature>
<feature type="zinc finger region" description="NR C4-type" evidence="4">
    <location>
        <begin position="602"/>
        <end position="622"/>
    </location>
</feature>
<feature type="zinc finger region" description="NR C4-type" evidence="4">
    <location>
        <begin position="638"/>
        <end position="662"/>
    </location>
</feature>
<feature type="region of interest" description="Modulating">
    <location>
        <begin position="1"/>
        <end position="601"/>
    </location>
</feature>
<feature type="region of interest" description="Disordered" evidence="6">
    <location>
        <begin position="230"/>
        <end position="328"/>
    </location>
</feature>
<feature type="region of interest" description="Disordered" evidence="6">
    <location>
        <begin position="345"/>
        <end position="375"/>
    </location>
</feature>
<feature type="region of interest" description="Hinge">
    <location>
        <begin position="668"/>
        <end position="723"/>
    </location>
</feature>
<feature type="region of interest" description="Disordered" evidence="6">
    <location>
        <begin position="682"/>
        <end position="708"/>
    </location>
</feature>
<feature type="region of interest" description="Important for coactivator binding" evidence="1">
    <location>
        <begin position="780"/>
        <end position="783"/>
    </location>
</feature>
<feature type="compositionally biased region" description="Polar residues" evidence="6">
    <location>
        <begin position="230"/>
        <end position="242"/>
    </location>
</feature>
<feature type="compositionally biased region" description="Low complexity" evidence="6">
    <location>
        <begin position="258"/>
        <end position="299"/>
    </location>
</feature>
<feature type="compositionally biased region" description="Polar residues" evidence="6">
    <location>
        <begin position="300"/>
        <end position="328"/>
    </location>
</feature>
<feature type="compositionally biased region" description="Low complexity" evidence="6">
    <location>
        <begin position="345"/>
        <end position="354"/>
    </location>
</feature>
<feature type="compositionally biased region" description="Pro residues" evidence="6">
    <location>
        <begin position="690"/>
        <end position="701"/>
    </location>
</feature>
<feature type="binding site" evidence="2">
    <location>
        <position position="602"/>
    </location>
    <ligand>
        <name>Zn(2+)</name>
        <dbReference type="ChEBI" id="CHEBI:29105"/>
        <label>1</label>
    </ligand>
</feature>
<feature type="binding site" evidence="2">
    <location>
        <position position="605"/>
    </location>
    <ligand>
        <name>Zn(2+)</name>
        <dbReference type="ChEBI" id="CHEBI:29105"/>
        <label>1</label>
    </ligand>
</feature>
<feature type="binding site" evidence="2">
    <location>
        <position position="619"/>
    </location>
    <ligand>
        <name>Zn(2+)</name>
        <dbReference type="ChEBI" id="CHEBI:29105"/>
        <label>1</label>
    </ligand>
</feature>
<feature type="binding site" evidence="2">
    <location>
        <position position="622"/>
    </location>
    <ligand>
        <name>Zn(2+)</name>
        <dbReference type="ChEBI" id="CHEBI:29105"/>
        <label>1</label>
    </ligand>
</feature>
<feature type="binding site" evidence="2">
    <location>
        <position position="638"/>
    </location>
    <ligand>
        <name>Zn(2+)</name>
        <dbReference type="ChEBI" id="CHEBI:29105"/>
        <label>2</label>
    </ligand>
</feature>
<feature type="binding site" evidence="2">
    <location>
        <position position="644"/>
    </location>
    <ligand>
        <name>Zn(2+)</name>
        <dbReference type="ChEBI" id="CHEBI:29105"/>
        <label>2</label>
    </ligand>
</feature>
<feature type="binding site" evidence="2">
    <location>
        <position position="654"/>
    </location>
    <ligand>
        <name>Zn(2+)</name>
        <dbReference type="ChEBI" id="CHEBI:29105"/>
        <label>2</label>
    </ligand>
</feature>
<feature type="binding site" evidence="2">
    <location>
        <position position="657"/>
    </location>
    <ligand>
        <name>Zn(2+)</name>
        <dbReference type="ChEBI" id="CHEBI:29105"/>
        <label>2</label>
    </ligand>
</feature>
<feature type="binding site" evidence="2">
    <location>
        <position position="768"/>
    </location>
    <ligand>
        <name>21-hydroxyprogesterone</name>
        <dbReference type="ChEBI" id="CHEBI:16973"/>
    </ligand>
</feature>
<feature type="binding site" evidence="2">
    <location>
        <position position="768"/>
    </location>
    <ligand>
        <name>aldosterone</name>
        <dbReference type="ChEBI" id="CHEBI:27584"/>
    </ligand>
</feature>
<feature type="binding site" evidence="2">
    <location>
        <position position="768"/>
    </location>
    <ligand>
        <name>progesterone</name>
        <dbReference type="ChEBI" id="CHEBI:17026"/>
    </ligand>
</feature>
<feature type="binding site" evidence="2">
    <location>
        <position position="774"/>
    </location>
    <ligand>
        <name>21-hydroxyprogesterone</name>
        <dbReference type="ChEBI" id="CHEBI:16973"/>
    </ligand>
</feature>
<feature type="binding site" evidence="2">
    <location>
        <position position="774"/>
    </location>
    <ligand>
        <name>aldosterone</name>
        <dbReference type="ChEBI" id="CHEBI:27584"/>
    </ligand>
</feature>
<feature type="binding site" evidence="2">
    <location>
        <position position="774"/>
    </location>
    <ligand>
        <name>progesterone</name>
        <dbReference type="ChEBI" id="CHEBI:17026"/>
    </ligand>
</feature>
<feature type="binding site" evidence="2">
    <location>
        <position position="815"/>
    </location>
    <ligand>
        <name>21-hydroxyprogesterone</name>
        <dbReference type="ChEBI" id="CHEBI:16973"/>
    </ligand>
</feature>
<feature type="binding site" evidence="2">
    <location>
        <position position="815"/>
    </location>
    <ligand>
        <name>aldosterone</name>
        <dbReference type="ChEBI" id="CHEBI:27584"/>
    </ligand>
</feature>
<feature type="binding site" evidence="2">
    <location>
        <position position="815"/>
    </location>
    <ligand>
        <name>progesterone</name>
        <dbReference type="ChEBI" id="CHEBI:17026"/>
    </ligand>
</feature>
<feature type="binding site" evidence="2">
    <location>
        <position position="943"/>
    </location>
    <ligand>
        <name>21-hydroxyprogesterone</name>
        <dbReference type="ChEBI" id="CHEBI:16973"/>
    </ligand>
</feature>
<feature type="binding site" evidence="2">
    <location>
        <position position="943"/>
    </location>
    <ligand>
        <name>aldosterone</name>
        <dbReference type="ChEBI" id="CHEBI:27584"/>
    </ligand>
</feature>
<feature type="binding site" evidence="2">
    <location>
        <position position="943"/>
    </location>
    <ligand>
        <name>progesterone</name>
        <dbReference type="ChEBI" id="CHEBI:17026"/>
    </ligand>
</feature>
<feature type="modified residue" description="Phosphoserine" evidence="3">
    <location>
        <position position="249"/>
    </location>
</feature>
<feature type="modified residue" description="Phosphoserine" evidence="3">
    <location>
        <position position="258"/>
    </location>
</feature>
<feature type="modified residue" description="Phosphoserine" evidence="3">
    <location>
        <position position="282"/>
    </location>
</feature>
<feature type="modified residue" description="Phosphoserine" evidence="3">
    <location>
        <position position="286"/>
    </location>
</feature>
<feature type="modified residue" description="Phosphoserine" evidence="3">
    <location>
        <position position="298"/>
    </location>
</feature>
<keyword id="KW-0963">Cytoplasm</keyword>
<keyword id="KW-0238">DNA-binding</keyword>
<keyword id="KW-0446">Lipid-binding</keyword>
<keyword id="KW-0479">Metal-binding</keyword>
<keyword id="KW-0539">Nucleus</keyword>
<keyword id="KW-0597">Phosphoprotein</keyword>
<keyword id="KW-0675">Receptor</keyword>
<keyword id="KW-0754">Steroid-binding</keyword>
<keyword id="KW-0804">Transcription</keyword>
<keyword id="KW-0805">Transcription regulation</keyword>
<keyword id="KW-0862">Zinc</keyword>
<keyword id="KW-0863">Zinc-finger</keyword>
<accession>Q9N0W8</accession>